<keyword id="KW-0028">Amino-acid biosynthesis</keyword>
<keyword id="KW-0368">Histidine biosynthesis</keyword>
<keyword id="KW-0378">Hydrolase</keyword>
<keyword id="KW-0486">Methionine biosynthesis</keyword>
<keyword id="KW-0511">Multifunctional enzyme</keyword>
<keyword id="KW-0521">NADP</keyword>
<keyword id="KW-0554">One-carbon metabolism</keyword>
<keyword id="KW-0560">Oxidoreductase</keyword>
<keyword id="KW-0658">Purine biosynthesis</keyword>
<keyword id="KW-1185">Reference proteome</keyword>
<reference key="1">
    <citation type="journal article" date="2008" name="Proc. Natl. Acad. Sci. U.S.A.">
        <title>Nitrogen fixation island and rhizosphere competence traits in the genome of root-associated Pseudomonas stutzeri A1501.</title>
        <authorList>
            <person name="Yan Y."/>
            <person name="Yang J."/>
            <person name="Dou Y."/>
            <person name="Chen M."/>
            <person name="Ping S."/>
            <person name="Peng J."/>
            <person name="Lu W."/>
            <person name="Zhang W."/>
            <person name="Yao Z."/>
            <person name="Li H."/>
            <person name="Liu W."/>
            <person name="He S."/>
            <person name="Geng L."/>
            <person name="Zhang X."/>
            <person name="Yang F."/>
            <person name="Yu H."/>
            <person name="Zhan Y."/>
            <person name="Li D."/>
            <person name="Lin Z."/>
            <person name="Wang Y."/>
            <person name="Elmerich C."/>
            <person name="Lin M."/>
            <person name="Jin Q."/>
        </authorList>
    </citation>
    <scope>NUCLEOTIDE SEQUENCE [LARGE SCALE GENOMIC DNA]</scope>
    <source>
        <strain>A1501</strain>
    </source>
</reference>
<sequence length="284" mass="30679">MTAKLIDGKTIAANIRQQISGRVAERRAQGLRAPGLAVILVGSDPASQVYVAHKRKDCEEVGFNSVAHDLPSDTRQEDLLALIDQLNDDASIDGILVQLPLPKHLDASQLFERIRPDKDVDGFHPYNVGRLAQRMPLLRPCTPKGIMTLLESTGVDLHGLDAVVVGASNIVGRPMALELLLAGCTTTVTHRFTRNLAEHVRRADLVVVATGITGLVKGEWIKPGAIVIDVGINRQTDGRLLGDVEFEPASERAAWITPVPGGVGPMTRACLLENTLYAAEHLHD</sequence>
<proteinExistence type="inferred from homology"/>
<comment type="function">
    <text evidence="1">Catalyzes the oxidation of 5,10-methylenetetrahydrofolate to 5,10-methenyltetrahydrofolate and then the hydrolysis of 5,10-methenyltetrahydrofolate to 10-formyltetrahydrofolate.</text>
</comment>
<comment type="catalytic activity">
    <reaction evidence="1">
        <text>(6R)-5,10-methylene-5,6,7,8-tetrahydrofolate + NADP(+) = (6R)-5,10-methenyltetrahydrofolate + NADPH</text>
        <dbReference type="Rhea" id="RHEA:22812"/>
        <dbReference type="ChEBI" id="CHEBI:15636"/>
        <dbReference type="ChEBI" id="CHEBI:57455"/>
        <dbReference type="ChEBI" id="CHEBI:57783"/>
        <dbReference type="ChEBI" id="CHEBI:58349"/>
        <dbReference type="EC" id="1.5.1.5"/>
    </reaction>
</comment>
<comment type="catalytic activity">
    <reaction evidence="1">
        <text>(6R)-5,10-methenyltetrahydrofolate + H2O = (6R)-10-formyltetrahydrofolate + H(+)</text>
        <dbReference type="Rhea" id="RHEA:23700"/>
        <dbReference type="ChEBI" id="CHEBI:15377"/>
        <dbReference type="ChEBI" id="CHEBI:15378"/>
        <dbReference type="ChEBI" id="CHEBI:57455"/>
        <dbReference type="ChEBI" id="CHEBI:195366"/>
        <dbReference type="EC" id="3.5.4.9"/>
    </reaction>
</comment>
<comment type="pathway">
    <text evidence="1">One-carbon metabolism; tetrahydrofolate interconversion.</text>
</comment>
<comment type="subunit">
    <text evidence="1">Homodimer.</text>
</comment>
<comment type="similarity">
    <text evidence="1">Belongs to the tetrahydrofolate dehydrogenase/cyclohydrolase family.</text>
</comment>
<evidence type="ECO:0000255" key="1">
    <source>
        <dbReference type="HAMAP-Rule" id="MF_01576"/>
    </source>
</evidence>
<protein>
    <recommendedName>
        <fullName evidence="1">Bifunctional protein FolD</fullName>
    </recommendedName>
    <domain>
        <recommendedName>
            <fullName evidence="1">Methylenetetrahydrofolate dehydrogenase</fullName>
            <ecNumber evidence="1">1.5.1.5</ecNumber>
        </recommendedName>
    </domain>
    <domain>
        <recommendedName>
            <fullName evidence="1">Methenyltetrahydrofolate cyclohydrolase</fullName>
            <ecNumber evidence="1">3.5.4.9</ecNumber>
        </recommendedName>
    </domain>
</protein>
<gene>
    <name evidence="1" type="primary">folD</name>
    <name type="ordered locus">PST_2054</name>
</gene>
<organism>
    <name type="scientific">Stutzerimonas stutzeri (strain A1501)</name>
    <name type="common">Pseudomonas stutzeri</name>
    <dbReference type="NCBI Taxonomy" id="379731"/>
    <lineage>
        <taxon>Bacteria</taxon>
        <taxon>Pseudomonadati</taxon>
        <taxon>Pseudomonadota</taxon>
        <taxon>Gammaproteobacteria</taxon>
        <taxon>Pseudomonadales</taxon>
        <taxon>Pseudomonadaceae</taxon>
        <taxon>Stutzerimonas</taxon>
    </lineage>
</organism>
<feature type="chain" id="PRO_0000305868" description="Bifunctional protein FolD">
    <location>
        <begin position="1"/>
        <end position="284"/>
    </location>
</feature>
<feature type="binding site" evidence="1">
    <location>
        <begin position="166"/>
        <end position="168"/>
    </location>
    <ligand>
        <name>NADP(+)</name>
        <dbReference type="ChEBI" id="CHEBI:58349"/>
    </ligand>
</feature>
<feature type="binding site" evidence="1">
    <location>
        <position position="232"/>
    </location>
    <ligand>
        <name>NADP(+)</name>
        <dbReference type="ChEBI" id="CHEBI:58349"/>
    </ligand>
</feature>
<dbReference type="EC" id="1.5.1.5" evidence="1"/>
<dbReference type="EC" id="3.5.4.9" evidence="1"/>
<dbReference type="EMBL" id="CP000304">
    <property type="protein sequence ID" value="ABP79725.1"/>
    <property type="molecule type" value="Genomic_DNA"/>
</dbReference>
<dbReference type="RefSeq" id="WP_011913194.1">
    <property type="nucleotide sequence ID" value="NC_009434.1"/>
</dbReference>
<dbReference type="SMR" id="A4VL74"/>
<dbReference type="KEGG" id="psa:PST_2054"/>
<dbReference type="eggNOG" id="COG0190">
    <property type="taxonomic scope" value="Bacteria"/>
</dbReference>
<dbReference type="HOGENOM" id="CLU_034045_2_1_6"/>
<dbReference type="UniPathway" id="UPA00193"/>
<dbReference type="Proteomes" id="UP000000233">
    <property type="component" value="Chromosome"/>
</dbReference>
<dbReference type="GO" id="GO:0005829">
    <property type="term" value="C:cytosol"/>
    <property type="evidence" value="ECO:0007669"/>
    <property type="project" value="TreeGrafter"/>
</dbReference>
<dbReference type="GO" id="GO:0004477">
    <property type="term" value="F:methenyltetrahydrofolate cyclohydrolase activity"/>
    <property type="evidence" value="ECO:0007669"/>
    <property type="project" value="UniProtKB-UniRule"/>
</dbReference>
<dbReference type="GO" id="GO:0004488">
    <property type="term" value="F:methylenetetrahydrofolate dehydrogenase (NADP+) activity"/>
    <property type="evidence" value="ECO:0007669"/>
    <property type="project" value="UniProtKB-UniRule"/>
</dbReference>
<dbReference type="GO" id="GO:0000105">
    <property type="term" value="P:L-histidine biosynthetic process"/>
    <property type="evidence" value="ECO:0007669"/>
    <property type="project" value="UniProtKB-KW"/>
</dbReference>
<dbReference type="GO" id="GO:0009086">
    <property type="term" value="P:methionine biosynthetic process"/>
    <property type="evidence" value="ECO:0007669"/>
    <property type="project" value="UniProtKB-KW"/>
</dbReference>
<dbReference type="GO" id="GO:0006164">
    <property type="term" value="P:purine nucleotide biosynthetic process"/>
    <property type="evidence" value="ECO:0007669"/>
    <property type="project" value="UniProtKB-KW"/>
</dbReference>
<dbReference type="GO" id="GO:0035999">
    <property type="term" value="P:tetrahydrofolate interconversion"/>
    <property type="evidence" value="ECO:0007669"/>
    <property type="project" value="UniProtKB-UniRule"/>
</dbReference>
<dbReference type="CDD" id="cd01080">
    <property type="entry name" value="NAD_bind_m-THF_DH_Cyclohyd"/>
    <property type="match status" value="1"/>
</dbReference>
<dbReference type="FunFam" id="3.40.50.10860:FF:000001">
    <property type="entry name" value="Bifunctional protein FolD"/>
    <property type="match status" value="1"/>
</dbReference>
<dbReference type="FunFam" id="3.40.50.720:FF:000006">
    <property type="entry name" value="Bifunctional protein FolD"/>
    <property type="match status" value="1"/>
</dbReference>
<dbReference type="Gene3D" id="3.40.50.10860">
    <property type="entry name" value="Leucine Dehydrogenase, chain A, domain 1"/>
    <property type="match status" value="1"/>
</dbReference>
<dbReference type="Gene3D" id="3.40.50.720">
    <property type="entry name" value="NAD(P)-binding Rossmann-like Domain"/>
    <property type="match status" value="1"/>
</dbReference>
<dbReference type="HAMAP" id="MF_01576">
    <property type="entry name" value="THF_DHG_CYH"/>
    <property type="match status" value="1"/>
</dbReference>
<dbReference type="InterPro" id="IPR046346">
    <property type="entry name" value="Aminoacid_DH-like_N_sf"/>
</dbReference>
<dbReference type="InterPro" id="IPR036291">
    <property type="entry name" value="NAD(P)-bd_dom_sf"/>
</dbReference>
<dbReference type="InterPro" id="IPR000672">
    <property type="entry name" value="THF_DH/CycHdrlase"/>
</dbReference>
<dbReference type="InterPro" id="IPR020630">
    <property type="entry name" value="THF_DH/CycHdrlase_cat_dom"/>
</dbReference>
<dbReference type="InterPro" id="IPR020867">
    <property type="entry name" value="THF_DH/CycHdrlase_CS"/>
</dbReference>
<dbReference type="InterPro" id="IPR020631">
    <property type="entry name" value="THF_DH/CycHdrlase_NAD-bd_dom"/>
</dbReference>
<dbReference type="NCBIfam" id="NF008058">
    <property type="entry name" value="PRK10792.1"/>
    <property type="match status" value="1"/>
</dbReference>
<dbReference type="NCBIfam" id="NF010783">
    <property type="entry name" value="PRK14186.1"/>
    <property type="match status" value="1"/>
</dbReference>
<dbReference type="PANTHER" id="PTHR48099:SF5">
    <property type="entry name" value="C-1-TETRAHYDROFOLATE SYNTHASE, CYTOPLASMIC"/>
    <property type="match status" value="1"/>
</dbReference>
<dbReference type="PANTHER" id="PTHR48099">
    <property type="entry name" value="C-1-TETRAHYDROFOLATE SYNTHASE, CYTOPLASMIC-RELATED"/>
    <property type="match status" value="1"/>
</dbReference>
<dbReference type="Pfam" id="PF00763">
    <property type="entry name" value="THF_DHG_CYH"/>
    <property type="match status" value="1"/>
</dbReference>
<dbReference type="Pfam" id="PF02882">
    <property type="entry name" value="THF_DHG_CYH_C"/>
    <property type="match status" value="1"/>
</dbReference>
<dbReference type="PRINTS" id="PR00085">
    <property type="entry name" value="THFDHDRGNASE"/>
</dbReference>
<dbReference type="SUPFAM" id="SSF53223">
    <property type="entry name" value="Aminoacid dehydrogenase-like, N-terminal domain"/>
    <property type="match status" value="1"/>
</dbReference>
<dbReference type="SUPFAM" id="SSF51735">
    <property type="entry name" value="NAD(P)-binding Rossmann-fold domains"/>
    <property type="match status" value="1"/>
</dbReference>
<dbReference type="PROSITE" id="PS00766">
    <property type="entry name" value="THF_DHG_CYH_1"/>
    <property type="match status" value="1"/>
</dbReference>
<accession>A4VL74</accession>
<name>FOLD_STUS1</name>